<protein>
    <recommendedName>
        <fullName>NADH-ubiquinone oxidoreductase chain 4</fullName>
        <ecNumber evidence="3">7.1.1.2</ecNumber>
    </recommendedName>
    <alternativeName>
        <fullName>NADH dehydrogenase subunit 4</fullName>
    </alternativeName>
</protein>
<proteinExistence type="inferred from homology"/>
<dbReference type="EC" id="7.1.1.2" evidence="3"/>
<dbReference type="EMBL" id="AY171193">
    <property type="protein sequence ID" value="AAO16251.1"/>
    <property type="molecule type" value="Genomic_DNA"/>
</dbReference>
<dbReference type="EMBL" id="AY171194">
    <property type="protein sequence ID" value="AAO16255.1"/>
    <property type="molecule type" value="Genomic_DNA"/>
</dbReference>
<dbReference type="EMBL" id="AY171195">
    <property type="protein sequence ID" value="AAO16259.1"/>
    <property type="molecule type" value="Genomic_DNA"/>
</dbReference>
<dbReference type="EMBL" id="AY171196">
    <property type="protein sequence ID" value="AAO16263.1"/>
    <property type="molecule type" value="Genomic_DNA"/>
</dbReference>
<dbReference type="EMBL" id="AY171197">
    <property type="protein sequence ID" value="AAO16267.1"/>
    <property type="molecule type" value="Genomic_DNA"/>
</dbReference>
<dbReference type="EMBL" id="AY171198">
    <property type="protein sequence ID" value="AAO16271.1"/>
    <property type="molecule type" value="Genomic_DNA"/>
</dbReference>
<dbReference type="EMBL" id="AY171199">
    <property type="protein sequence ID" value="AAO16275.1"/>
    <property type="molecule type" value="Genomic_DNA"/>
</dbReference>
<dbReference type="EMBL" id="AY171200">
    <property type="protein sequence ID" value="AAO16279.1"/>
    <property type="molecule type" value="Genomic_DNA"/>
</dbReference>
<dbReference type="EMBL" id="AY171201">
    <property type="protein sequence ID" value="AAO16283.1"/>
    <property type="molecule type" value="Genomic_DNA"/>
</dbReference>
<dbReference type="EMBL" id="AY171202">
    <property type="protein sequence ID" value="AAO16287.1"/>
    <property type="molecule type" value="Genomic_DNA"/>
</dbReference>
<dbReference type="EMBL" id="AY171203">
    <property type="protein sequence ID" value="AAO16291.1"/>
    <property type="molecule type" value="Genomic_DNA"/>
</dbReference>
<dbReference type="EMBL" id="AY171204">
    <property type="protein sequence ID" value="AAO16295.1"/>
    <property type="molecule type" value="Genomic_DNA"/>
</dbReference>
<dbReference type="EMBL" id="AY171205">
    <property type="protein sequence ID" value="AAO16299.1"/>
    <property type="molecule type" value="Genomic_DNA"/>
</dbReference>
<dbReference type="EMBL" id="AY171206">
    <property type="protein sequence ID" value="AAO16303.1"/>
    <property type="molecule type" value="Genomic_DNA"/>
</dbReference>
<dbReference type="EMBL" id="AY171207">
    <property type="protein sequence ID" value="AAO16307.1"/>
    <property type="molecule type" value="Genomic_DNA"/>
</dbReference>
<dbReference type="EMBL" id="X54252">
    <property type="protein sequence ID" value="CAA38158.1"/>
    <property type="molecule type" value="Genomic_DNA"/>
</dbReference>
<dbReference type="PIR" id="S26033">
    <property type="entry name" value="S26033"/>
</dbReference>
<dbReference type="RefSeq" id="NP_006960.1">
    <property type="nucleotide sequence ID" value="NC_001328.1"/>
</dbReference>
<dbReference type="SMR" id="P24892"/>
<dbReference type="FunCoup" id="P24892">
    <property type="interactions" value="113"/>
</dbReference>
<dbReference type="IntAct" id="P24892">
    <property type="interactions" value="2"/>
</dbReference>
<dbReference type="STRING" id="6239.MTCE.25.1"/>
<dbReference type="PaxDb" id="6239-MTCE.25"/>
<dbReference type="EnsemblMetazoa" id="MTCE.25.1">
    <property type="protein sequence ID" value="MTCE.25.1"/>
    <property type="gene ID" value="WBGene00010963"/>
</dbReference>
<dbReference type="GeneID" id="2565705"/>
<dbReference type="KEGG" id="cel:KEF34_p05"/>
<dbReference type="AGR" id="WB:WBGene00010963"/>
<dbReference type="CTD" id="4538"/>
<dbReference type="WormBase" id="MTCE.25">
    <property type="protein sequence ID" value="CE35349"/>
    <property type="gene ID" value="WBGene00010963"/>
    <property type="gene designation" value="nduo-4"/>
</dbReference>
<dbReference type="eggNOG" id="KOG4845">
    <property type="taxonomic scope" value="Eukaryota"/>
</dbReference>
<dbReference type="GeneTree" id="ENSGT00730000111316"/>
<dbReference type="HOGENOM" id="CLU_621950_0_0_1"/>
<dbReference type="InParanoid" id="P24892"/>
<dbReference type="PhylomeDB" id="P24892"/>
<dbReference type="PRO" id="PR:P24892"/>
<dbReference type="Proteomes" id="UP000001940">
    <property type="component" value="Mitochondrion"/>
</dbReference>
<dbReference type="Bgee" id="WBGene00010963">
    <property type="expression patterns" value="Expressed in pharyngeal muscle cell (C elegans) and 4 other cell types or tissues"/>
</dbReference>
<dbReference type="GO" id="GO:0031966">
    <property type="term" value="C:mitochondrial membrane"/>
    <property type="evidence" value="ECO:0007669"/>
    <property type="project" value="UniProtKB-SubCell"/>
</dbReference>
<dbReference type="GO" id="GO:0045271">
    <property type="term" value="C:respiratory chain complex I"/>
    <property type="evidence" value="ECO:0000250"/>
    <property type="project" value="WormBase"/>
</dbReference>
<dbReference type="GO" id="GO:0008137">
    <property type="term" value="F:NADH dehydrogenase (ubiquinone) activity"/>
    <property type="evidence" value="ECO:0000303"/>
    <property type="project" value="UniProtKB"/>
</dbReference>
<dbReference type="GO" id="GO:0048039">
    <property type="term" value="F:ubiquinone binding"/>
    <property type="evidence" value="ECO:0000318"/>
    <property type="project" value="GO_Central"/>
</dbReference>
<dbReference type="GO" id="GO:0009060">
    <property type="term" value="P:aerobic respiration"/>
    <property type="evidence" value="ECO:0000318"/>
    <property type="project" value="GO_Central"/>
</dbReference>
<dbReference type="GO" id="GO:0015990">
    <property type="term" value="P:electron transport coupled proton transport"/>
    <property type="evidence" value="ECO:0000318"/>
    <property type="project" value="GO_Central"/>
</dbReference>
<dbReference type="GO" id="GO:0006120">
    <property type="term" value="P:mitochondrial electron transport, NADH to ubiquinone"/>
    <property type="evidence" value="ECO:0000303"/>
    <property type="project" value="UniProtKB"/>
</dbReference>
<dbReference type="InterPro" id="IPR003918">
    <property type="entry name" value="NADH_UbQ_OxRdtase"/>
</dbReference>
<dbReference type="InterPro" id="IPR001750">
    <property type="entry name" value="ND/Mrp_TM"/>
</dbReference>
<dbReference type="PANTHER" id="PTHR43507">
    <property type="entry name" value="NADH-UBIQUINONE OXIDOREDUCTASE CHAIN 4"/>
    <property type="match status" value="1"/>
</dbReference>
<dbReference type="PANTHER" id="PTHR43507:SF20">
    <property type="entry name" value="NADH-UBIQUINONE OXIDOREDUCTASE CHAIN 4"/>
    <property type="match status" value="1"/>
</dbReference>
<dbReference type="Pfam" id="PF00361">
    <property type="entry name" value="Proton_antipo_M"/>
    <property type="match status" value="1"/>
</dbReference>
<dbReference type="PRINTS" id="PR01437">
    <property type="entry name" value="NUOXDRDTASE4"/>
</dbReference>
<evidence type="ECO:0000250" key="1">
    <source>
        <dbReference type="UniProtKB" id="P03910"/>
    </source>
</evidence>
<evidence type="ECO:0000255" key="2"/>
<evidence type="ECO:0000255" key="3">
    <source>
        <dbReference type="RuleBase" id="RU003297"/>
    </source>
</evidence>
<evidence type="ECO:0000269" key="4">
    <source>
    </source>
</evidence>
<evidence type="ECO:0000305" key="5"/>
<evidence type="ECO:0000312" key="6">
    <source>
        <dbReference type="WormBase" id="MTCE.25"/>
    </source>
</evidence>
<sequence length="409" mass="47207">MLEFLFISLLWLFKPIYFLLFTVMFSFLIFNNFSWGGLFLVLDSYSFILLIVMSLFILGIIVISEKNNNLLILSEILVFICIIFFIPSNMMMLYMFFELSMFPILVMILGYGSQIEKINSSYYLMFYAAFCSFPFLFVYFKSNFLLVFTYYNFVISWEMFFILSLSFMMKFPIYFLHLWLPKAHVEAPTTASMLLAGLLLKLGTAGFLRILGSLSFVHNNVWILIAFLGMILGSFCCVFQSDSKALAAYSSVTHMSFLLLSLVFITMSSKISSVMLMLAHGYTSTLMFYLIGEFYHTSGSRMIYFMSSFFSSSMIMGILFSVVFLSNSGVPPSLSFLSEFLVISNSMLISKSMFVMIFIYFVVSFYYSLFLITSSLMGKGYHNFNTWNVGFSAPLVLMMYNVFWLSVFY</sequence>
<keyword id="KW-0249">Electron transport</keyword>
<keyword id="KW-0472">Membrane</keyword>
<keyword id="KW-0496">Mitochondrion</keyword>
<keyword id="KW-0520">NAD</keyword>
<keyword id="KW-1185">Reference proteome</keyword>
<keyword id="KW-0679">Respiratory chain</keyword>
<keyword id="KW-1278">Translocase</keyword>
<keyword id="KW-0812">Transmembrane</keyword>
<keyword id="KW-1133">Transmembrane helix</keyword>
<keyword id="KW-0813">Transport</keyword>
<keyword id="KW-0830">Ubiquinone</keyword>
<feature type="chain" id="PRO_0000117911" description="NADH-ubiquinone oxidoreductase chain 4">
    <location>
        <begin position="1"/>
        <end position="409"/>
    </location>
</feature>
<feature type="transmembrane region" description="Helical" evidence="2">
    <location>
        <begin position="10"/>
        <end position="30"/>
    </location>
</feature>
<feature type="transmembrane region" description="Helical" evidence="2">
    <location>
        <begin position="44"/>
        <end position="64"/>
    </location>
</feature>
<feature type="transmembrane region" description="Helical" evidence="2">
    <location>
        <begin position="76"/>
        <end position="96"/>
    </location>
</feature>
<feature type="transmembrane region" description="Helical" evidence="2">
    <location>
        <begin position="98"/>
        <end position="118"/>
    </location>
</feature>
<feature type="transmembrane region" description="Helical" evidence="2">
    <location>
        <begin position="120"/>
        <end position="140"/>
    </location>
</feature>
<feature type="transmembrane region" description="Helical" evidence="2">
    <location>
        <begin position="160"/>
        <end position="180"/>
    </location>
</feature>
<feature type="transmembrane region" description="Helical" evidence="2">
    <location>
        <begin position="194"/>
        <end position="214"/>
    </location>
</feature>
<feature type="transmembrane region" description="Helical" evidence="2">
    <location>
        <begin position="221"/>
        <end position="241"/>
    </location>
</feature>
<feature type="transmembrane region" description="Helical" evidence="2">
    <location>
        <begin position="245"/>
        <end position="265"/>
    </location>
</feature>
<feature type="transmembrane region" description="Helical" evidence="2">
    <location>
        <begin position="271"/>
        <end position="291"/>
    </location>
</feature>
<feature type="transmembrane region" description="Helical" evidence="2">
    <location>
        <begin position="305"/>
        <end position="325"/>
    </location>
</feature>
<feature type="transmembrane region" description="Helical" evidence="2">
    <location>
        <begin position="353"/>
        <end position="373"/>
    </location>
</feature>
<feature type="transmembrane region" description="Helical" evidence="2">
    <location>
        <begin position="389"/>
        <end position="409"/>
    </location>
</feature>
<feature type="sequence variant" description="In strain: AB1." evidence="4">
    <original>W</original>
    <variation>G</variation>
    <location>
        <position position="11"/>
    </location>
</feature>
<feature type="sequence variant" description="In strain: PB306." evidence="4">
    <original>L</original>
    <variation>W</variation>
    <location>
        <position position="20"/>
    </location>
</feature>
<feature type="sequence variant" description="In strain: PB306." evidence="4">
    <original>S</original>
    <variation>G</variation>
    <location>
        <position position="26"/>
    </location>
</feature>
<feature type="sequence variant" description="In strain: PB306." evidence="4">
    <original>F</original>
    <variation>C</variation>
    <location>
        <position position="30"/>
    </location>
</feature>
<feature type="sequence variant" description="In strain: CB4856." evidence="4">
    <original>Y</original>
    <variation>C</variation>
    <location>
        <position position="45"/>
    </location>
</feature>
<feature type="sequence variant" description="In strain: PB306." evidence="4">
    <original>I</original>
    <variation>S</variation>
    <location>
        <position position="51"/>
    </location>
</feature>
<feature type="sequence variant" description="In strain: PB306." evidence="4">
    <original>I</original>
    <variation>S</variation>
    <location>
        <position position="61"/>
    </location>
</feature>
<feature type="sequence variant" description="In strain: PB306." evidence="4">
    <original>S</original>
    <variation>G</variation>
    <location>
        <position position="64"/>
    </location>
</feature>
<feature type="sequence variant" description="In strain: PB306." evidence="4">
    <original>L</original>
    <variation>V</variation>
    <location>
        <position position="70"/>
    </location>
</feature>
<feature type="sequence variant" description="In strain: PB303." evidence="4">
    <original>G</original>
    <variation>S</variation>
    <location>
        <position position="317"/>
    </location>
</feature>
<feature type="sequence variant" description="In strain: KR314.">
    <original>SAPLVLMMYNVFWLSVFY</original>
    <variation>QHH</variation>
    <location>
        <begin position="392"/>
        <end position="409"/>
    </location>
</feature>
<comment type="function">
    <text evidence="1">Core subunit of the mitochondrial membrane respiratory chain NADH dehydrogenase (Complex I) that is believed to belong to the minimal assembly required for catalysis. Complex I functions in the transfer of electrons from NADH to the respiratory chain. The immediate electron acceptor for the enzyme is believed to be ubiquinone.</text>
</comment>
<comment type="catalytic activity">
    <reaction evidence="3">
        <text>a ubiquinone + NADH + 5 H(+)(in) = a ubiquinol + NAD(+) + 4 H(+)(out)</text>
        <dbReference type="Rhea" id="RHEA:29091"/>
        <dbReference type="Rhea" id="RHEA-COMP:9565"/>
        <dbReference type="Rhea" id="RHEA-COMP:9566"/>
        <dbReference type="ChEBI" id="CHEBI:15378"/>
        <dbReference type="ChEBI" id="CHEBI:16389"/>
        <dbReference type="ChEBI" id="CHEBI:17976"/>
        <dbReference type="ChEBI" id="CHEBI:57540"/>
        <dbReference type="ChEBI" id="CHEBI:57945"/>
        <dbReference type="EC" id="7.1.1.2"/>
    </reaction>
</comment>
<comment type="subcellular location">
    <subcellularLocation>
        <location evidence="1">Mitochondrion membrane</location>
        <topology evidence="1">Multi-pass membrane protein</topology>
    </subcellularLocation>
</comment>
<comment type="similarity">
    <text evidence="5">Belongs to the complex I subunit 4 family.</text>
</comment>
<gene>
    <name evidence="6" type="primary">nduo-4</name>
    <name evidence="6" type="synonym">nd4</name>
    <name evidence="6" type="ORF">MTCE.25</name>
</gene>
<accession>P24892</accession>
<reference key="1">
    <citation type="journal article" date="2003" name="Mol. Biol. Evol.">
        <title>Phylogenetics in Caenorhabditis elegans: an analysis of divergence and outcrossing.</title>
        <authorList>
            <person name="Denver D.R."/>
            <person name="Morris K."/>
            <person name="Thomas W.K."/>
        </authorList>
    </citation>
    <scope>NUCLEOTIDE SEQUENCE [GENOMIC DNA]</scope>
    <scope>VARIANTS GLY-11; TRP-20; GLY-26; CYS-30; CYS-45; SER-51; SER-61; GLY-64; VAL-70 AND SER-317</scope>
    <source>
        <strain>AB1</strain>
        <strain>AB2</strain>
        <strain>Bristol N2</strain>
        <strain>CB4852</strain>
        <strain>CB4853</strain>
        <strain>CB4854</strain>
        <strain>CB4855</strain>
        <strain>CB4856</strain>
        <strain>CB4857</strain>
        <strain>CB4858</strain>
        <strain>KR314</strain>
        <strain>PB303</strain>
        <strain>PB306</strain>
        <strain>RW7000</strain>
        <strain>TR403</strain>
    </source>
</reference>
<reference key="2">
    <citation type="journal article" date="1992" name="Genetics">
        <title>The mitochondrial genomes of two nematodes, Caenorhabditis elegans and Ascaris suum.</title>
        <authorList>
            <person name="Okimoto R."/>
            <person name="Macfarlane J.L."/>
            <person name="Clary D.O."/>
            <person name="Wolstenholme D.R."/>
        </authorList>
    </citation>
    <scope>NUCLEOTIDE SEQUENCE [LARGE SCALE GENOMIC DNA]</scope>
    <source>
        <strain>Bristol N2</strain>
    </source>
</reference>
<reference key="3">
    <citation type="journal article" date="1990" name="Nucleic Acids Res.">
        <title>Evidence for the frequent use of TTG as the translation initiation codon of mitochondrial protein genes in the nematodes, Ascaris suum and Caenorhabditis elegans.</title>
        <authorList>
            <person name="Okimoto R."/>
            <person name="Macfarlane J.L."/>
            <person name="Wolstenholme D.R."/>
        </authorList>
    </citation>
    <scope>NUCLEOTIDE SEQUENCE [GENOMIC DNA] OF 1-25</scope>
</reference>
<geneLocation type="mitochondrion"/>
<organism>
    <name type="scientific">Caenorhabditis elegans</name>
    <dbReference type="NCBI Taxonomy" id="6239"/>
    <lineage>
        <taxon>Eukaryota</taxon>
        <taxon>Metazoa</taxon>
        <taxon>Ecdysozoa</taxon>
        <taxon>Nematoda</taxon>
        <taxon>Chromadorea</taxon>
        <taxon>Rhabditida</taxon>
        <taxon>Rhabditina</taxon>
        <taxon>Rhabditomorpha</taxon>
        <taxon>Rhabditoidea</taxon>
        <taxon>Rhabditidae</taxon>
        <taxon>Peloderinae</taxon>
        <taxon>Caenorhabditis</taxon>
    </lineage>
</organism>
<name>NU4M_CAEEL</name>